<evidence type="ECO:0000256" key="1">
    <source>
        <dbReference type="SAM" id="MobiDB-lite"/>
    </source>
</evidence>
<evidence type="ECO:0000269" key="2">
    <source>
    </source>
</evidence>
<evidence type="ECO:0000269" key="3">
    <source>
    </source>
</evidence>
<evidence type="ECO:0000269" key="4">
    <source>
    </source>
</evidence>
<evidence type="ECO:0000305" key="5"/>
<evidence type="ECO:0007744" key="6">
    <source>
    </source>
</evidence>
<accession>P53850</accession>
<accession>D6W0T9</accession>
<sequence length="401" mass="46212">MVGPGLGINRVRRKGVYSTKKGSGDNLLLMKRQGKHDIHDRESDDLSGHDAFSPSKKRGKIDSITEDEIEVKKLSTVATFDKLSRSFPNSEVQAAKNAALRGKEKEEEKVVSIPLIQNLKNEDIESIKCRNNNLLDGKKLLLEAELSAVEDNQIFSSSFPEDKKLSLQSCLSSKEQIIKKLQVREEYMSKFKLPPMLFSDELLTEVEPFMPIVMDILEGKISSVYYFEAKNAFKNSQKAYLSVDEFRKLNLNKFTAGFYGLKRQLRVGEEIAKRYKRALTHNQPATLKWWGITDFCNYVLAPETLTSFCIYQLNLSNKSCSSKTPNKHPKQQLNEKEYYYDPELRMLAYDLLEDTVEYGIIVADSDPIEQWEAAIEEDRLRELKLDVHNYSSRRWRLDTHD</sequence>
<name>RTC4_YEAST</name>
<proteinExistence type="evidence at protein level"/>
<reference key="1">
    <citation type="journal article" date="1997" name="Yeast">
        <title>Sequence analysis of the 33 kb long region between ORC5 and SUI1 from the left arm of chromosome XIV from Saccharomyces cerevisiae.</title>
        <authorList>
            <person name="Sen-Gupta M."/>
            <person name="Gueldener U."/>
            <person name="Beinhauer J.D."/>
            <person name="Fiedler T.A."/>
            <person name="Hegemann J.H."/>
        </authorList>
    </citation>
    <scope>NUCLEOTIDE SEQUENCE [GENOMIC DNA]</scope>
    <source>
        <strain>ATCC 96604 / S288c / FY1679</strain>
    </source>
</reference>
<reference key="2">
    <citation type="journal article" date="1997" name="Nature">
        <title>The nucleotide sequence of Saccharomyces cerevisiae chromosome XIV and its evolutionary implications.</title>
        <authorList>
            <person name="Philippsen P."/>
            <person name="Kleine K."/>
            <person name="Poehlmann R."/>
            <person name="Duesterhoeft A."/>
            <person name="Hamberg K."/>
            <person name="Hegemann J.H."/>
            <person name="Obermaier B."/>
            <person name="Urrestarazu L.A."/>
            <person name="Aert R."/>
            <person name="Albermann K."/>
            <person name="Altmann R."/>
            <person name="Andre B."/>
            <person name="Baladron V."/>
            <person name="Ballesta J.P.G."/>
            <person name="Becam A.-M."/>
            <person name="Beinhauer J.D."/>
            <person name="Boskovic J."/>
            <person name="Buitrago M.J."/>
            <person name="Bussereau F."/>
            <person name="Coster F."/>
            <person name="Crouzet M."/>
            <person name="D'Angelo M."/>
            <person name="Dal Pero F."/>
            <person name="De Antoni A."/>
            <person name="del Rey F."/>
            <person name="Doignon F."/>
            <person name="Domdey H."/>
            <person name="Dubois E."/>
            <person name="Fiedler T.A."/>
            <person name="Fleig U."/>
            <person name="Floeth M."/>
            <person name="Fritz C."/>
            <person name="Gaillardin C."/>
            <person name="Garcia-Cantalejo J.M."/>
            <person name="Glansdorff N."/>
            <person name="Goffeau A."/>
            <person name="Gueldener U."/>
            <person name="Herbert C.J."/>
            <person name="Heumann K."/>
            <person name="Heuss-Neitzel D."/>
            <person name="Hilbert H."/>
            <person name="Hinni K."/>
            <person name="Iraqui Houssaini I."/>
            <person name="Jacquet M."/>
            <person name="Jimenez A."/>
            <person name="Jonniaux J.-L."/>
            <person name="Karpfinger-Hartl L."/>
            <person name="Lanfranchi G."/>
            <person name="Lepingle A."/>
            <person name="Levesque H."/>
            <person name="Lyck R."/>
            <person name="Maftahi M."/>
            <person name="Mallet L."/>
            <person name="Maurer C.T.C."/>
            <person name="Messenguy F."/>
            <person name="Mewes H.-W."/>
            <person name="Moestl D."/>
            <person name="Nasr F."/>
            <person name="Nicaud J.-M."/>
            <person name="Niedenthal R.K."/>
            <person name="Pandolfo D."/>
            <person name="Pierard A."/>
            <person name="Piravandi E."/>
            <person name="Planta R.J."/>
            <person name="Pohl T.M."/>
            <person name="Purnelle B."/>
            <person name="Rebischung C."/>
            <person name="Remacha M.A."/>
            <person name="Revuelta J.L."/>
            <person name="Rinke M."/>
            <person name="Saiz J.E."/>
            <person name="Sartorello F."/>
            <person name="Scherens B."/>
            <person name="Sen-Gupta M."/>
            <person name="Soler-Mira A."/>
            <person name="Urbanus J.H.M."/>
            <person name="Valle G."/>
            <person name="Van Dyck L."/>
            <person name="Verhasselt P."/>
            <person name="Vierendeels F."/>
            <person name="Vissers S."/>
            <person name="Voet M."/>
            <person name="Volckaert G."/>
            <person name="Wach A."/>
            <person name="Wambutt R."/>
            <person name="Wedler H."/>
            <person name="Zollner A."/>
            <person name="Hani J."/>
        </authorList>
    </citation>
    <scope>NUCLEOTIDE SEQUENCE [LARGE SCALE GENOMIC DNA]</scope>
    <source>
        <strain>ATCC 204508 / S288c</strain>
    </source>
</reference>
<reference key="3">
    <citation type="journal article" date="2014" name="G3 (Bethesda)">
        <title>The reference genome sequence of Saccharomyces cerevisiae: Then and now.</title>
        <authorList>
            <person name="Engel S.R."/>
            <person name="Dietrich F.S."/>
            <person name="Fisk D.G."/>
            <person name="Binkley G."/>
            <person name="Balakrishnan R."/>
            <person name="Costanzo M.C."/>
            <person name="Dwight S.S."/>
            <person name="Hitz B.C."/>
            <person name="Karra K."/>
            <person name="Nash R.S."/>
            <person name="Weng S."/>
            <person name="Wong E.D."/>
            <person name="Lloyd P."/>
            <person name="Skrzypek M.S."/>
            <person name="Miyasato S.R."/>
            <person name="Simison M."/>
            <person name="Cherry J.M."/>
        </authorList>
    </citation>
    <scope>GENOME REANNOTATION</scope>
    <source>
        <strain>ATCC 204508 / S288c</strain>
    </source>
</reference>
<reference key="4">
    <citation type="journal article" date="2007" name="Genome Res.">
        <title>Approaching a complete repository of sequence-verified protein-encoding clones for Saccharomyces cerevisiae.</title>
        <authorList>
            <person name="Hu Y."/>
            <person name="Rolfs A."/>
            <person name="Bhullar B."/>
            <person name="Murthy T.V.S."/>
            <person name="Zhu C."/>
            <person name="Berger M.F."/>
            <person name="Camargo A.A."/>
            <person name="Kelley F."/>
            <person name="McCarron S."/>
            <person name="Jepson D."/>
            <person name="Richardson A."/>
            <person name="Raphael J."/>
            <person name="Moreira D."/>
            <person name="Taycher E."/>
            <person name="Zuo D."/>
            <person name="Mohr S."/>
            <person name="Kane M.F."/>
            <person name="Williamson J."/>
            <person name="Simpson A.J.G."/>
            <person name="Bulyk M.L."/>
            <person name="Harlow E."/>
            <person name="Marsischky G."/>
            <person name="Kolodner R.D."/>
            <person name="LaBaer J."/>
        </authorList>
    </citation>
    <scope>NUCLEOTIDE SEQUENCE [GENOMIC DNA]</scope>
    <source>
        <strain>ATCC 204508 / S288c</strain>
    </source>
</reference>
<reference key="5">
    <citation type="journal article" date="2003" name="Nature">
        <title>Global analysis of protein localization in budding yeast.</title>
        <authorList>
            <person name="Huh W.-K."/>
            <person name="Falvo J.V."/>
            <person name="Gerke L.C."/>
            <person name="Carroll A.S."/>
            <person name="Howson R.W."/>
            <person name="Weissman J.S."/>
            <person name="O'Shea E.K."/>
        </authorList>
    </citation>
    <scope>SUBCELLULAR LOCATION [LARGE SCALE ANALYSIS]</scope>
</reference>
<reference key="6">
    <citation type="journal article" date="2003" name="Nature">
        <title>Global analysis of protein expression in yeast.</title>
        <authorList>
            <person name="Ghaemmaghami S."/>
            <person name="Huh W.-K."/>
            <person name="Bower K."/>
            <person name="Howson R.W."/>
            <person name="Belle A."/>
            <person name="Dephoure N."/>
            <person name="O'Shea E.K."/>
            <person name="Weissman J.S."/>
        </authorList>
    </citation>
    <scope>LEVEL OF PROTEIN EXPRESSION [LARGE SCALE ANALYSIS]</scope>
</reference>
<reference key="7">
    <citation type="journal article" date="2008" name="Genetics">
        <title>A genomewide suppressor and enhancer analysis of cdc13-1 reveals varied cellular processes influencing telomere capping in Saccharomyces cerevisiae.</title>
        <authorList>
            <person name="Addinall S.G."/>
            <person name="Downey M."/>
            <person name="Yu M."/>
            <person name="Zubko M.K."/>
            <person name="Dewar J."/>
            <person name="Leake A."/>
            <person name="Hallinan J."/>
            <person name="Shaw O."/>
            <person name="James K."/>
            <person name="Wilkinson D.J."/>
            <person name="Wipat A."/>
            <person name="Durocher D."/>
            <person name="Lydall D."/>
        </authorList>
    </citation>
    <scope>FUNCTION</scope>
</reference>
<reference key="8">
    <citation type="journal article" date="2008" name="Mol. Cell. Proteomics">
        <title>A multidimensional chromatography technology for in-depth phosphoproteome analysis.</title>
        <authorList>
            <person name="Albuquerque C.P."/>
            <person name="Smolka M.B."/>
            <person name="Payne S.H."/>
            <person name="Bafna V."/>
            <person name="Eng J."/>
            <person name="Zhou H."/>
        </authorList>
    </citation>
    <scope>PHOSPHORYLATION [LARGE SCALE ANALYSIS] AT SER-23</scope>
    <scope>IDENTIFICATION BY MASS SPECTROMETRY [LARGE SCALE ANALYSIS]</scope>
</reference>
<protein>
    <recommendedName>
        <fullName>Restriction of telomere capping protein 4</fullName>
    </recommendedName>
</protein>
<keyword id="KW-0963">Cytoplasm</keyword>
<keyword id="KW-0539">Nucleus</keyword>
<keyword id="KW-0597">Phosphoprotein</keyword>
<keyword id="KW-1185">Reference proteome</keyword>
<dbReference type="EMBL" id="X96722">
    <property type="protein sequence ID" value="CAA65490.1"/>
    <property type="molecule type" value="Genomic_DNA"/>
</dbReference>
<dbReference type="EMBL" id="Z71530">
    <property type="protein sequence ID" value="CAA96161.1"/>
    <property type="molecule type" value="Genomic_DNA"/>
</dbReference>
<dbReference type="EMBL" id="AY558024">
    <property type="protein sequence ID" value="AAS56350.1"/>
    <property type="molecule type" value="Genomic_DNA"/>
</dbReference>
<dbReference type="EMBL" id="BK006947">
    <property type="protein sequence ID" value="DAA10305.1"/>
    <property type="molecule type" value="Genomic_DNA"/>
</dbReference>
<dbReference type="PIR" id="S63227">
    <property type="entry name" value="S63227"/>
</dbReference>
<dbReference type="RefSeq" id="NP_014145.1">
    <property type="nucleotide sequence ID" value="NM_001183092.1"/>
</dbReference>
<dbReference type="BioGRID" id="35585">
    <property type="interactions" value="25"/>
</dbReference>
<dbReference type="FunCoup" id="P53850">
    <property type="interactions" value="42"/>
</dbReference>
<dbReference type="MINT" id="P53850"/>
<dbReference type="STRING" id="4932.YNL254C"/>
<dbReference type="iPTMnet" id="P53850"/>
<dbReference type="PaxDb" id="4932-YNL254C"/>
<dbReference type="PeptideAtlas" id="P53850"/>
<dbReference type="EnsemblFungi" id="YNL254C_mRNA">
    <property type="protein sequence ID" value="YNL254C"/>
    <property type="gene ID" value="YNL254C"/>
</dbReference>
<dbReference type="GeneID" id="855467"/>
<dbReference type="KEGG" id="sce:YNL254C"/>
<dbReference type="AGR" id="SGD:S000005198"/>
<dbReference type="SGD" id="S000005198">
    <property type="gene designation" value="RTC4"/>
</dbReference>
<dbReference type="VEuPathDB" id="FungiDB:YNL254C"/>
<dbReference type="eggNOG" id="ENOG502S1RG">
    <property type="taxonomic scope" value="Eukaryota"/>
</dbReference>
<dbReference type="HOGENOM" id="CLU_049922_0_0_1"/>
<dbReference type="InParanoid" id="P53850"/>
<dbReference type="OMA" id="VREEYMS"/>
<dbReference type="OrthoDB" id="128308at2759"/>
<dbReference type="BioCyc" id="YEAST:G3O-33251-MONOMER"/>
<dbReference type="BioGRID-ORCS" id="855467">
    <property type="hits" value="0 hits in 10 CRISPR screens"/>
</dbReference>
<dbReference type="PRO" id="PR:P53850"/>
<dbReference type="Proteomes" id="UP000002311">
    <property type="component" value="Chromosome XIV"/>
</dbReference>
<dbReference type="RNAct" id="P53850">
    <property type="molecule type" value="protein"/>
</dbReference>
<dbReference type="GO" id="GO:0005737">
    <property type="term" value="C:cytoplasm"/>
    <property type="evidence" value="ECO:0007005"/>
    <property type="project" value="SGD"/>
</dbReference>
<dbReference type="GO" id="GO:0005634">
    <property type="term" value="C:nucleus"/>
    <property type="evidence" value="ECO:0007005"/>
    <property type="project" value="SGD"/>
</dbReference>
<dbReference type="InterPro" id="IPR039024">
    <property type="entry name" value="RTC4"/>
</dbReference>
<dbReference type="InterPro" id="IPR028094">
    <property type="entry name" value="RTC4_C"/>
</dbReference>
<dbReference type="PANTHER" id="PTHR41391">
    <property type="entry name" value="RESTRICTION OF TELOMERE CAPPING PROTEIN 4"/>
    <property type="match status" value="1"/>
</dbReference>
<dbReference type="PANTHER" id="PTHR41391:SF1">
    <property type="entry name" value="RESTRICTION OF TELOMERE CAPPING PROTEIN 4"/>
    <property type="match status" value="1"/>
</dbReference>
<dbReference type="Pfam" id="PF14474">
    <property type="entry name" value="RTC4"/>
    <property type="match status" value="1"/>
</dbReference>
<dbReference type="SMART" id="SM01312">
    <property type="entry name" value="RTC4"/>
    <property type="match status" value="1"/>
</dbReference>
<feature type="chain" id="PRO_0000203384" description="Restriction of telomere capping protein 4">
    <location>
        <begin position="1"/>
        <end position="401"/>
    </location>
</feature>
<feature type="region of interest" description="Disordered" evidence="1">
    <location>
        <begin position="35"/>
        <end position="59"/>
    </location>
</feature>
<feature type="compositionally biased region" description="Basic and acidic residues" evidence="1">
    <location>
        <begin position="35"/>
        <end position="48"/>
    </location>
</feature>
<feature type="modified residue" description="Phosphoserine" evidence="6">
    <location>
        <position position="23"/>
    </location>
</feature>
<gene>
    <name type="primary">RTC4</name>
    <name type="ordered locus">YNL254C</name>
    <name type="ORF">N0856</name>
</gene>
<comment type="function">
    <text evidence="4">May be involved in a process influencing telomere capping.</text>
</comment>
<comment type="subcellular location">
    <subcellularLocation>
        <location evidence="2">Cytoplasm</location>
    </subcellularLocation>
    <subcellularLocation>
        <location evidence="2">Nucleus</location>
    </subcellularLocation>
</comment>
<comment type="miscellaneous">
    <text evidence="3">Present with 799 molecules/cell in log phase SD medium.</text>
</comment>
<comment type="similarity">
    <text evidence="5">Belongs to the RTC4 family.</text>
</comment>
<organism>
    <name type="scientific">Saccharomyces cerevisiae (strain ATCC 204508 / S288c)</name>
    <name type="common">Baker's yeast</name>
    <dbReference type="NCBI Taxonomy" id="559292"/>
    <lineage>
        <taxon>Eukaryota</taxon>
        <taxon>Fungi</taxon>
        <taxon>Dikarya</taxon>
        <taxon>Ascomycota</taxon>
        <taxon>Saccharomycotina</taxon>
        <taxon>Saccharomycetes</taxon>
        <taxon>Saccharomycetales</taxon>
        <taxon>Saccharomycetaceae</taxon>
        <taxon>Saccharomyces</taxon>
    </lineage>
</organism>